<gene>
    <name evidence="1" type="primary">hemL</name>
    <name type="synonym">gsa</name>
    <name type="synonym">popC</name>
    <name type="ordered locus">c0189</name>
</gene>
<evidence type="ECO:0000255" key="1">
    <source>
        <dbReference type="HAMAP-Rule" id="MF_00375"/>
    </source>
</evidence>
<name>GSA_ECOL6</name>
<sequence length="426" mass="45413">MSKSENLYSAARELIPGGVNSPVRAFTGVGGTPLFIEKADGAYLYDVDGKAYIDYVGSWGPMVLGHNHPAIRNAVIEAAERGLSFGAPTEMEVKMAQLVTELVPTMDMVRMVNSGTEATMSAIRLARGFTGRDKIIKFEGCYHGHADCLLVKAGSGALTLGQPNSPGVPADFAKHTLTCTYNDLASVRAAFEQYPQEIACIIVEPVAGNMNCVPPLPEFLPGLRALCDEFGALLIIDEVMTGFRVALAGAQDYYGVEPDLTCLGKIIGGGMPVGAFGGRRDVMDALAPTGPVYQAGTLSGNPIAMAAGFACLNEVAQPGVHETLDELTTRLAEGLREAAEEAGIPLVVNHVGGMFGIFFTDAESVTCYQDVMACDVERFKRFFHMMLDEGVYLAPSAFEAGFMSVAHSMEDINNTIDAARRVFAKL</sequence>
<feature type="chain" id="PRO_0000120410" description="Glutamate-1-semialdehyde 2,1-aminomutase">
    <location>
        <begin position="1"/>
        <end position="426"/>
    </location>
</feature>
<feature type="modified residue" description="N6-(pyridoxal phosphate)lysine" evidence="1">
    <location>
        <position position="265"/>
    </location>
</feature>
<dbReference type="EC" id="5.4.3.8" evidence="1"/>
<dbReference type="EMBL" id="AE014075">
    <property type="protein sequence ID" value="AAN78683.1"/>
    <property type="molecule type" value="Genomic_DNA"/>
</dbReference>
<dbReference type="RefSeq" id="WP_000045295.1">
    <property type="nucleotide sequence ID" value="NZ_CP051263.1"/>
</dbReference>
<dbReference type="SMR" id="Q8FL16"/>
<dbReference type="STRING" id="199310.c0189"/>
<dbReference type="KEGG" id="ecc:c0189"/>
<dbReference type="eggNOG" id="COG0001">
    <property type="taxonomic scope" value="Bacteria"/>
</dbReference>
<dbReference type="HOGENOM" id="CLU_016922_1_5_6"/>
<dbReference type="BioCyc" id="ECOL199310:C0189-MONOMER"/>
<dbReference type="UniPathway" id="UPA00251">
    <property type="reaction ID" value="UER00317"/>
</dbReference>
<dbReference type="Proteomes" id="UP000001410">
    <property type="component" value="Chromosome"/>
</dbReference>
<dbReference type="GO" id="GO:0005737">
    <property type="term" value="C:cytoplasm"/>
    <property type="evidence" value="ECO:0007669"/>
    <property type="project" value="UniProtKB-SubCell"/>
</dbReference>
<dbReference type="GO" id="GO:0042286">
    <property type="term" value="F:glutamate-1-semialdehyde 2,1-aminomutase activity"/>
    <property type="evidence" value="ECO:0007669"/>
    <property type="project" value="UniProtKB-UniRule"/>
</dbReference>
<dbReference type="GO" id="GO:0030170">
    <property type="term" value="F:pyridoxal phosphate binding"/>
    <property type="evidence" value="ECO:0007669"/>
    <property type="project" value="InterPro"/>
</dbReference>
<dbReference type="GO" id="GO:0008483">
    <property type="term" value="F:transaminase activity"/>
    <property type="evidence" value="ECO:0007669"/>
    <property type="project" value="InterPro"/>
</dbReference>
<dbReference type="GO" id="GO:0006782">
    <property type="term" value="P:protoporphyrinogen IX biosynthetic process"/>
    <property type="evidence" value="ECO:0007669"/>
    <property type="project" value="UniProtKB-UniRule"/>
</dbReference>
<dbReference type="CDD" id="cd00610">
    <property type="entry name" value="OAT_like"/>
    <property type="match status" value="1"/>
</dbReference>
<dbReference type="FunFam" id="3.40.640.10:FF:000021">
    <property type="entry name" value="Glutamate-1-semialdehyde 2,1-aminomutase"/>
    <property type="match status" value="1"/>
</dbReference>
<dbReference type="FunFam" id="3.90.1150.10:FF:000012">
    <property type="entry name" value="Glutamate-1-semialdehyde 2,1-aminomutase"/>
    <property type="match status" value="1"/>
</dbReference>
<dbReference type="Gene3D" id="3.90.1150.10">
    <property type="entry name" value="Aspartate Aminotransferase, domain 1"/>
    <property type="match status" value="1"/>
</dbReference>
<dbReference type="Gene3D" id="3.40.640.10">
    <property type="entry name" value="Type I PLP-dependent aspartate aminotransferase-like (Major domain)"/>
    <property type="match status" value="1"/>
</dbReference>
<dbReference type="HAMAP" id="MF_00375">
    <property type="entry name" value="HemL_aminotrans_3"/>
    <property type="match status" value="1"/>
</dbReference>
<dbReference type="InterPro" id="IPR004639">
    <property type="entry name" value="4pyrrol_synth_GluAld_NH2Trfase"/>
</dbReference>
<dbReference type="InterPro" id="IPR005814">
    <property type="entry name" value="Aminotrans_3"/>
</dbReference>
<dbReference type="InterPro" id="IPR049704">
    <property type="entry name" value="Aminotrans_3_PPA_site"/>
</dbReference>
<dbReference type="InterPro" id="IPR015424">
    <property type="entry name" value="PyrdxlP-dep_Trfase"/>
</dbReference>
<dbReference type="InterPro" id="IPR015421">
    <property type="entry name" value="PyrdxlP-dep_Trfase_major"/>
</dbReference>
<dbReference type="InterPro" id="IPR015422">
    <property type="entry name" value="PyrdxlP-dep_Trfase_small"/>
</dbReference>
<dbReference type="NCBIfam" id="TIGR00713">
    <property type="entry name" value="hemL"/>
    <property type="match status" value="1"/>
</dbReference>
<dbReference type="NCBIfam" id="NF000818">
    <property type="entry name" value="PRK00062.1"/>
    <property type="match status" value="1"/>
</dbReference>
<dbReference type="PANTHER" id="PTHR43713">
    <property type="entry name" value="GLUTAMATE-1-SEMIALDEHYDE 2,1-AMINOMUTASE"/>
    <property type="match status" value="1"/>
</dbReference>
<dbReference type="PANTHER" id="PTHR43713:SF3">
    <property type="entry name" value="GLUTAMATE-1-SEMIALDEHYDE 2,1-AMINOMUTASE 1, CHLOROPLASTIC-RELATED"/>
    <property type="match status" value="1"/>
</dbReference>
<dbReference type="Pfam" id="PF00202">
    <property type="entry name" value="Aminotran_3"/>
    <property type="match status" value="1"/>
</dbReference>
<dbReference type="SUPFAM" id="SSF53383">
    <property type="entry name" value="PLP-dependent transferases"/>
    <property type="match status" value="1"/>
</dbReference>
<dbReference type="PROSITE" id="PS00600">
    <property type="entry name" value="AA_TRANSFER_CLASS_3"/>
    <property type="match status" value="1"/>
</dbReference>
<keyword id="KW-0963">Cytoplasm</keyword>
<keyword id="KW-0413">Isomerase</keyword>
<keyword id="KW-0627">Porphyrin biosynthesis</keyword>
<keyword id="KW-0663">Pyridoxal phosphate</keyword>
<keyword id="KW-1185">Reference proteome</keyword>
<organism>
    <name type="scientific">Escherichia coli O6:H1 (strain CFT073 / ATCC 700928 / UPEC)</name>
    <dbReference type="NCBI Taxonomy" id="199310"/>
    <lineage>
        <taxon>Bacteria</taxon>
        <taxon>Pseudomonadati</taxon>
        <taxon>Pseudomonadota</taxon>
        <taxon>Gammaproteobacteria</taxon>
        <taxon>Enterobacterales</taxon>
        <taxon>Enterobacteriaceae</taxon>
        <taxon>Escherichia</taxon>
    </lineage>
</organism>
<protein>
    <recommendedName>
        <fullName evidence="1">Glutamate-1-semialdehyde 2,1-aminomutase</fullName>
        <shortName evidence="1">GSA</shortName>
        <ecNumber evidence="1">5.4.3.8</ecNumber>
    </recommendedName>
    <alternativeName>
        <fullName evidence="1">Glutamate-1-semialdehyde aminotransferase</fullName>
        <shortName evidence="1">GSA-AT</shortName>
    </alternativeName>
</protein>
<reference key="1">
    <citation type="journal article" date="2002" name="Proc. Natl. Acad. Sci. U.S.A.">
        <title>Extensive mosaic structure revealed by the complete genome sequence of uropathogenic Escherichia coli.</title>
        <authorList>
            <person name="Welch R.A."/>
            <person name="Burland V."/>
            <person name="Plunkett G. III"/>
            <person name="Redford P."/>
            <person name="Roesch P."/>
            <person name="Rasko D."/>
            <person name="Buckles E.L."/>
            <person name="Liou S.-R."/>
            <person name="Boutin A."/>
            <person name="Hackett J."/>
            <person name="Stroud D."/>
            <person name="Mayhew G.F."/>
            <person name="Rose D.J."/>
            <person name="Zhou S."/>
            <person name="Schwartz D.C."/>
            <person name="Perna N.T."/>
            <person name="Mobley H.L.T."/>
            <person name="Donnenberg M.S."/>
            <person name="Blattner F.R."/>
        </authorList>
    </citation>
    <scope>NUCLEOTIDE SEQUENCE [LARGE SCALE GENOMIC DNA]</scope>
    <source>
        <strain>CFT073 / ATCC 700928 / UPEC</strain>
    </source>
</reference>
<proteinExistence type="inferred from homology"/>
<accession>Q8FL16</accession>
<comment type="catalytic activity">
    <reaction evidence="1">
        <text>(S)-4-amino-5-oxopentanoate = 5-aminolevulinate</text>
        <dbReference type="Rhea" id="RHEA:14265"/>
        <dbReference type="ChEBI" id="CHEBI:57501"/>
        <dbReference type="ChEBI" id="CHEBI:356416"/>
        <dbReference type="EC" id="5.4.3.8"/>
    </reaction>
</comment>
<comment type="cofactor">
    <cofactor evidence="1">
        <name>pyridoxal 5'-phosphate</name>
        <dbReference type="ChEBI" id="CHEBI:597326"/>
    </cofactor>
</comment>
<comment type="pathway">
    <text evidence="1">Porphyrin-containing compound metabolism; protoporphyrin-IX biosynthesis; 5-aminolevulinate from L-glutamyl-tRNA(Glu): step 2/2.</text>
</comment>
<comment type="subunit">
    <text evidence="1">Homodimer.</text>
</comment>
<comment type="subcellular location">
    <subcellularLocation>
        <location evidence="1">Cytoplasm</location>
    </subcellularLocation>
</comment>
<comment type="similarity">
    <text evidence="1">Belongs to the class-III pyridoxal-phosphate-dependent aminotransferase family. HemL subfamily.</text>
</comment>